<gene>
    <name evidence="1" type="primary">rplJ</name>
    <name type="ordered locus">RrIowa_0221</name>
</gene>
<accession>B0BWA7</accession>
<comment type="function">
    <text evidence="1">Forms part of the ribosomal stalk, playing a central role in the interaction of the ribosome with GTP-bound translation factors.</text>
</comment>
<comment type="subunit">
    <text evidence="1">Part of the ribosomal stalk of the 50S ribosomal subunit. The N-terminus interacts with L11 and the large rRNA to form the base of the stalk. The C-terminus forms an elongated spine to which L12 dimers bind in a sequential fashion forming a multimeric L10(L12)X complex.</text>
</comment>
<comment type="similarity">
    <text evidence="1">Belongs to the universal ribosomal protein uL10 family.</text>
</comment>
<name>RL10_RICRO</name>
<keyword id="KW-0687">Ribonucleoprotein</keyword>
<keyword id="KW-0689">Ribosomal protein</keyword>
<keyword id="KW-0694">RNA-binding</keyword>
<keyword id="KW-0699">rRNA-binding</keyword>
<protein>
    <recommendedName>
        <fullName evidence="1">Large ribosomal subunit protein uL10</fullName>
    </recommendedName>
    <alternativeName>
        <fullName evidence="2">50S ribosomal protein L10</fullName>
    </alternativeName>
</protein>
<reference key="1">
    <citation type="journal article" date="2008" name="Infect. Immun.">
        <title>Genomic comparison of virulent Rickettsia rickettsii Sheila Smith and avirulent Rickettsia rickettsii Iowa.</title>
        <authorList>
            <person name="Ellison D.W."/>
            <person name="Clark T.R."/>
            <person name="Sturdevant D.E."/>
            <person name="Virtaneva K."/>
            <person name="Porcella S.F."/>
            <person name="Hackstadt T."/>
        </authorList>
    </citation>
    <scope>NUCLEOTIDE SEQUENCE [LARGE SCALE GENOMIC DNA]</scope>
    <source>
        <strain>Iowa</strain>
    </source>
</reference>
<proteinExistence type="inferred from homology"/>
<feature type="chain" id="PRO_1000079556" description="Large ribosomal subunit protein uL10">
    <location>
        <begin position="1"/>
        <end position="169"/>
    </location>
</feature>
<dbReference type="EMBL" id="CP000766">
    <property type="protein sequence ID" value="ABY72133.1"/>
    <property type="molecule type" value="Genomic_DNA"/>
</dbReference>
<dbReference type="RefSeq" id="WP_012150395.1">
    <property type="nucleotide sequence ID" value="NC_010263.3"/>
</dbReference>
<dbReference type="SMR" id="B0BWA7"/>
<dbReference type="GeneID" id="79936971"/>
<dbReference type="KEGG" id="rrj:RrIowa_0221"/>
<dbReference type="eggNOG" id="COG0244">
    <property type="taxonomic scope" value="Bacteria"/>
</dbReference>
<dbReference type="HOGENOM" id="CLU_092227_0_0_5"/>
<dbReference type="Proteomes" id="UP000000796">
    <property type="component" value="Chromosome"/>
</dbReference>
<dbReference type="GO" id="GO:0015934">
    <property type="term" value="C:large ribosomal subunit"/>
    <property type="evidence" value="ECO:0007669"/>
    <property type="project" value="InterPro"/>
</dbReference>
<dbReference type="GO" id="GO:0070180">
    <property type="term" value="F:large ribosomal subunit rRNA binding"/>
    <property type="evidence" value="ECO:0007669"/>
    <property type="project" value="UniProtKB-UniRule"/>
</dbReference>
<dbReference type="GO" id="GO:0003735">
    <property type="term" value="F:structural constituent of ribosome"/>
    <property type="evidence" value="ECO:0007669"/>
    <property type="project" value="InterPro"/>
</dbReference>
<dbReference type="GO" id="GO:0006412">
    <property type="term" value="P:translation"/>
    <property type="evidence" value="ECO:0007669"/>
    <property type="project" value="UniProtKB-UniRule"/>
</dbReference>
<dbReference type="CDD" id="cd05797">
    <property type="entry name" value="Ribosomal_L10"/>
    <property type="match status" value="1"/>
</dbReference>
<dbReference type="Gene3D" id="3.30.70.1730">
    <property type="match status" value="1"/>
</dbReference>
<dbReference type="Gene3D" id="6.10.250.290">
    <property type="match status" value="1"/>
</dbReference>
<dbReference type="HAMAP" id="MF_00362">
    <property type="entry name" value="Ribosomal_uL10"/>
    <property type="match status" value="1"/>
</dbReference>
<dbReference type="InterPro" id="IPR001790">
    <property type="entry name" value="Ribosomal_uL10"/>
</dbReference>
<dbReference type="InterPro" id="IPR043141">
    <property type="entry name" value="Ribosomal_uL10-like_sf"/>
</dbReference>
<dbReference type="InterPro" id="IPR022973">
    <property type="entry name" value="Ribosomal_uL10_bac"/>
</dbReference>
<dbReference type="InterPro" id="IPR047865">
    <property type="entry name" value="Ribosomal_uL10_bac_type"/>
</dbReference>
<dbReference type="InterPro" id="IPR002363">
    <property type="entry name" value="Ribosomal_uL10_CS_bac"/>
</dbReference>
<dbReference type="NCBIfam" id="NF000955">
    <property type="entry name" value="PRK00099.1-1"/>
    <property type="match status" value="1"/>
</dbReference>
<dbReference type="PANTHER" id="PTHR11560">
    <property type="entry name" value="39S RIBOSOMAL PROTEIN L10, MITOCHONDRIAL"/>
    <property type="match status" value="1"/>
</dbReference>
<dbReference type="Pfam" id="PF00466">
    <property type="entry name" value="Ribosomal_L10"/>
    <property type="match status" value="1"/>
</dbReference>
<dbReference type="SUPFAM" id="SSF160369">
    <property type="entry name" value="Ribosomal protein L10-like"/>
    <property type="match status" value="1"/>
</dbReference>
<dbReference type="PROSITE" id="PS01109">
    <property type="entry name" value="RIBOSOMAL_L10"/>
    <property type="match status" value="1"/>
</dbReference>
<sequence>MLRSEKPVAVEDIVNIYKESPSIIITHYHGLTVSQVSVLREALKSKEAGFKVVKNTLAKIAANQTGLNSIANLFAGPTAIVYSKEPVEMAKLVVNFAKANDNLKIIGGIVDNHVLDEHSIKELSKLLTLNELRGKIIGLLQAPATQVVGVLQAPSSSMARVIQAYASKN</sequence>
<evidence type="ECO:0000255" key="1">
    <source>
        <dbReference type="HAMAP-Rule" id="MF_00362"/>
    </source>
</evidence>
<evidence type="ECO:0000305" key="2"/>
<organism>
    <name type="scientific">Rickettsia rickettsii (strain Iowa)</name>
    <dbReference type="NCBI Taxonomy" id="452659"/>
    <lineage>
        <taxon>Bacteria</taxon>
        <taxon>Pseudomonadati</taxon>
        <taxon>Pseudomonadota</taxon>
        <taxon>Alphaproteobacteria</taxon>
        <taxon>Rickettsiales</taxon>
        <taxon>Rickettsiaceae</taxon>
        <taxon>Rickettsieae</taxon>
        <taxon>Rickettsia</taxon>
        <taxon>spotted fever group</taxon>
    </lineage>
</organism>